<protein>
    <recommendedName>
        <fullName evidence="1">Pyridoxal kinase PdxY</fullName>
        <shortName evidence="1">PL kinase</shortName>
        <ecNumber evidence="1">2.7.1.35</ecNumber>
    </recommendedName>
</protein>
<keyword id="KW-0067">ATP-binding</keyword>
<keyword id="KW-0418">Kinase</keyword>
<keyword id="KW-0460">Magnesium</keyword>
<keyword id="KW-0547">Nucleotide-binding</keyword>
<keyword id="KW-1185">Reference proteome</keyword>
<keyword id="KW-0808">Transferase</keyword>
<accession>Q8ZPM8</accession>
<proteinExistence type="inferred from homology"/>
<feature type="chain" id="PRO_0000269829" description="Pyridoxal kinase PdxY">
    <location>
        <begin position="1"/>
        <end position="286"/>
    </location>
</feature>
<feature type="binding site" evidence="1">
    <location>
        <position position="9"/>
    </location>
    <ligand>
        <name>substrate</name>
    </ligand>
</feature>
<feature type="binding site" evidence="1">
    <location>
        <begin position="44"/>
        <end position="45"/>
    </location>
    <ligand>
        <name>substrate</name>
    </ligand>
</feature>
<feature type="binding site" evidence="1">
    <location>
        <position position="111"/>
    </location>
    <ligand>
        <name>ATP</name>
        <dbReference type="ChEBI" id="CHEBI:30616"/>
    </ligand>
</feature>
<feature type="binding site" evidence="1">
    <location>
        <position position="143"/>
    </location>
    <ligand>
        <name>ATP</name>
        <dbReference type="ChEBI" id="CHEBI:30616"/>
    </ligand>
</feature>
<feature type="binding site" evidence="1">
    <location>
        <position position="148"/>
    </location>
    <ligand>
        <name>ATP</name>
        <dbReference type="ChEBI" id="CHEBI:30616"/>
    </ligand>
</feature>
<feature type="binding site" evidence="1">
    <location>
        <position position="181"/>
    </location>
    <ligand>
        <name>ATP</name>
        <dbReference type="ChEBI" id="CHEBI:30616"/>
    </ligand>
</feature>
<feature type="binding site" evidence="1">
    <location>
        <begin position="208"/>
        <end position="211"/>
    </location>
    <ligand>
        <name>ATP</name>
        <dbReference type="ChEBI" id="CHEBI:30616"/>
    </ligand>
</feature>
<feature type="binding site" evidence="1">
    <location>
        <position position="223"/>
    </location>
    <ligand>
        <name>substrate</name>
    </ligand>
</feature>
<evidence type="ECO:0000255" key="1">
    <source>
        <dbReference type="HAMAP-Rule" id="MF_01639"/>
    </source>
</evidence>
<organism>
    <name type="scientific">Salmonella typhimurium (strain LT2 / SGSC1412 / ATCC 700720)</name>
    <dbReference type="NCBI Taxonomy" id="99287"/>
    <lineage>
        <taxon>Bacteria</taxon>
        <taxon>Pseudomonadati</taxon>
        <taxon>Pseudomonadota</taxon>
        <taxon>Gammaproteobacteria</taxon>
        <taxon>Enterobacterales</taxon>
        <taxon>Enterobacteriaceae</taxon>
        <taxon>Salmonella</taxon>
    </lineage>
</organism>
<name>PDXY_SALTY</name>
<gene>
    <name evidence="1" type="primary">pdxY</name>
    <name type="ordered locus">STM1450</name>
</gene>
<sequence>MKNILAIQSHVVFGHAGNSAAEFPMRRLGANVWPLNTVQFSNHTQYGKWTGCVMPPSHLTEIVQGIADIGQLAHCDAVLSGYLGSAEQGEHILGIVRQVKAANPQAKYFCDPVMGHPEKGCIVAPGVAEFHVRYALPASDIIAPNLIELEILSKHSVNNVDDAVQAARELIAQGPEIVLVKHLARAGYSSERFEMLLVTAQEAWHISRPLVDFGSRQPVGVGDVTSGLLLVKLLQGATLQQALEHVTAAVYEIMIATKTMQEYELQVVAAQDRIANPEHYFSATRL</sequence>
<reference key="1">
    <citation type="journal article" date="2001" name="Nature">
        <title>Complete genome sequence of Salmonella enterica serovar Typhimurium LT2.</title>
        <authorList>
            <person name="McClelland M."/>
            <person name="Sanderson K.E."/>
            <person name="Spieth J."/>
            <person name="Clifton S.W."/>
            <person name="Latreille P."/>
            <person name="Courtney L."/>
            <person name="Porwollik S."/>
            <person name="Ali J."/>
            <person name="Dante M."/>
            <person name="Du F."/>
            <person name="Hou S."/>
            <person name="Layman D."/>
            <person name="Leonard S."/>
            <person name="Nguyen C."/>
            <person name="Scott K."/>
            <person name="Holmes A."/>
            <person name="Grewal N."/>
            <person name="Mulvaney E."/>
            <person name="Ryan E."/>
            <person name="Sun H."/>
            <person name="Florea L."/>
            <person name="Miller W."/>
            <person name="Stoneking T."/>
            <person name="Nhan M."/>
            <person name="Waterston R."/>
            <person name="Wilson R.K."/>
        </authorList>
    </citation>
    <scope>NUCLEOTIDE SEQUENCE [LARGE SCALE GENOMIC DNA]</scope>
    <source>
        <strain>LT2 / SGSC1412 / ATCC 700720</strain>
    </source>
</reference>
<comment type="function">
    <text evidence="1">Pyridoxal kinase involved in the salvage pathway of pyridoxal 5'-phosphate (PLP). Catalyzes the phosphorylation of pyridoxal to PLP.</text>
</comment>
<comment type="catalytic activity">
    <reaction evidence="1">
        <text>pyridoxal + ATP = pyridoxal 5'-phosphate + ADP + H(+)</text>
        <dbReference type="Rhea" id="RHEA:10224"/>
        <dbReference type="ChEBI" id="CHEBI:15378"/>
        <dbReference type="ChEBI" id="CHEBI:17310"/>
        <dbReference type="ChEBI" id="CHEBI:30616"/>
        <dbReference type="ChEBI" id="CHEBI:456216"/>
        <dbReference type="ChEBI" id="CHEBI:597326"/>
        <dbReference type="EC" id="2.7.1.35"/>
    </reaction>
</comment>
<comment type="cofactor">
    <cofactor evidence="1">
        <name>Mg(2+)</name>
        <dbReference type="ChEBI" id="CHEBI:18420"/>
    </cofactor>
</comment>
<comment type="pathway">
    <text evidence="1">Cofactor metabolism; pyridoxal 5'-phosphate salvage; pyridoxal 5'-phosphate from pyridoxal: step 1/1.</text>
</comment>
<comment type="subunit">
    <text evidence="1">Homodimer.</text>
</comment>
<comment type="similarity">
    <text evidence="1">Belongs to the pyridoxine kinase family. PdxY subfamily.</text>
</comment>
<dbReference type="EC" id="2.7.1.35" evidence="1"/>
<dbReference type="EMBL" id="AE006468">
    <property type="protein sequence ID" value="AAL20372.1"/>
    <property type="molecule type" value="Genomic_DNA"/>
</dbReference>
<dbReference type="RefSeq" id="NP_460413.1">
    <property type="nucleotide sequence ID" value="NC_003197.2"/>
</dbReference>
<dbReference type="RefSeq" id="WP_000789732.1">
    <property type="nucleotide sequence ID" value="NC_003197.2"/>
</dbReference>
<dbReference type="SMR" id="Q8ZPM8"/>
<dbReference type="STRING" id="99287.STM1450"/>
<dbReference type="PaxDb" id="99287-STM1450"/>
<dbReference type="GeneID" id="1252968"/>
<dbReference type="KEGG" id="stm:STM1450"/>
<dbReference type="PATRIC" id="fig|99287.12.peg.1533"/>
<dbReference type="HOGENOM" id="CLU_046496_3_0_6"/>
<dbReference type="OMA" id="HTQYGQW"/>
<dbReference type="PhylomeDB" id="Q8ZPM8"/>
<dbReference type="BioCyc" id="SENT99287:STM1450-MONOMER"/>
<dbReference type="UniPathway" id="UPA01068">
    <property type="reaction ID" value="UER00298"/>
</dbReference>
<dbReference type="Proteomes" id="UP000001014">
    <property type="component" value="Chromosome"/>
</dbReference>
<dbReference type="GO" id="GO:0005829">
    <property type="term" value="C:cytosol"/>
    <property type="evidence" value="ECO:0000318"/>
    <property type="project" value="GO_Central"/>
</dbReference>
<dbReference type="GO" id="GO:0005524">
    <property type="term" value="F:ATP binding"/>
    <property type="evidence" value="ECO:0007669"/>
    <property type="project" value="UniProtKB-UniRule"/>
</dbReference>
<dbReference type="GO" id="GO:0000287">
    <property type="term" value="F:magnesium ion binding"/>
    <property type="evidence" value="ECO:0007669"/>
    <property type="project" value="UniProtKB-UniRule"/>
</dbReference>
<dbReference type="GO" id="GO:0008478">
    <property type="term" value="F:pyridoxal kinase activity"/>
    <property type="evidence" value="ECO:0000318"/>
    <property type="project" value="GO_Central"/>
</dbReference>
<dbReference type="GO" id="GO:0009443">
    <property type="term" value="P:pyridoxal 5'-phosphate salvage"/>
    <property type="evidence" value="ECO:0000318"/>
    <property type="project" value="GO_Central"/>
</dbReference>
<dbReference type="CDD" id="cd01173">
    <property type="entry name" value="pyridoxal_pyridoxamine_kinase"/>
    <property type="match status" value="1"/>
</dbReference>
<dbReference type="FunFam" id="3.40.1190.20:FF:000008">
    <property type="entry name" value="Pyridoxal kinase PdxY"/>
    <property type="match status" value="1"/>
</dbReference>
<dbReference type="Gene3D" id="3.40.1190.20">
    <property type="match status" value="1"/>
</dbReference>
<dbReference type="HAMAP" id="MF_01639">
    <property type="entry name" value="PdxY"/>
    <property type="match status" value="1"/>
</dbReference>
<dbReference type="InterPro" id="IPR013749">
    <property type="entry name" value="PM/HMP-P_kinase-1"/>
</dbReference>
<dbReference type="InterPro" id="IPR004625">
    <property type="entry name" value="PyrdxlKinase"/>
</dbReference>
<dbReference type="InterPro" id="IPR023685">
    <property type="entry name" value="Pyridoxal_kinase_PdxY"/>
</dbReference>
<dbReference type="InterPro" id="IPR029056">
    <property type="entry name" value="Ribokinase-like"/>
</dbReference>
<dbReference type="NCBIfam" id="NF004398">
    <property type="entry name" value="PRK05756.1"/>
    <property type="match status" value="1"/>
</dbReference>
<dbReference type="NCBIfam" id="TIGR00687">
    <property type="entry name" value="pyridox_kin"/>
    <property type="match status" value="1"/>
</dbReference>
<dbReference type="PANTHER" id="PTHR10534">
    <property type="entry name" value="PYRIDOXAL KINASE"/>
    <property type="match status" value="1"/>
</dbReference>
<dbReference type="PANTHER" id="PTHR10534:SF2">
    <property type="entry name" value="PYRIDOXAL KINASE"/>
    <property type="match status" value="1"/>
</dbReference>
<dbReference type="Pfam" id="PF08543">
    <property type="entry name" value="Phos_pyr_kin"/>
    <property type="match status" value="1"/>
</dbReference>
<dbReference type="SUPFAM" id="SSF53613">
    <property type="entry name" value="Ribokinase-like"/>
    <property type="match status" value="1"/>
</dbReference>